<sequence length="171" mass="18918">MKIAIGCDHIVTNEKMAVSDFLKSKGYEVLDFGTYDHTRTHYPIFGKKVGEAVVSGQADLGVCICGTGVGINNAVNKVPGVRSALVRDMTSALYAKEELNANVIGFGGKITGELLICDIIEAFIHAEYKPTEENKKLIAKIEHVETHNAHQADDNFFTEFLEKWDRGEYHD</sequence>
<gene>
    <name evidence="1" type="primary">lacB</name>
    <name type="ordered locus">SSA_1698</name>
</gene>
<comment type="catalytic activity">
    <reaction evidence="1">
        <text>aldehydo-D-galactose 6-phosphate = keto-D-tagatose 6-phosphate</text>
        <dbReference type="Rhea" id="RHEA:13033"/>
        <dbReference type="ChEBI" id="CHEBI:58255"/>
        <dbReference type="ChEBI" id="CHEBI:134283"/>
        <dbReference type="EC" id="5.3.1.26"/>
    </reaction>
</comment>
<comment type="pathway">
    <text evidence="1">Carbohydrate metabolism; D-galactose 6-phosphate degradation; D-tagatose 6-phosphate from D-galactose 6-phosphate: step 1/1.</text>
</comment>
<comment type="subunit">
    <text evidence="1">Heteromultimeric protein consisting of LacA and LacB.</text>
</comment>
<comment type="similarity">
    <text evidence="1">Belongs to the LacAB/RpiB family.</text>
</comment>
<accession>A3CPH6</accession>
<reference key="1">
    <citation type="journal article" date="2007" name="J. Bacteriol.">
        <title>Genome of the opportunistic pathogen Streptococcus sanguinis.</title>
        <authorList>
            <person name="Xu P."/>
            <person name="Alves J.M."/>
            <person name="Kitten T."/>
            <person name="Brown A."/>
            <person name="Chen Z."/>
            <person name="Ozaki L.S."/>
            <person name="Manque P."/>
            <person name="Ge X."/>
            <person name="Serrano M.G."/>
            <person name="Puiu D."/>
            <person name="Hendricks S."/>
            <person name="Wang Y."/>
            <person name="Chaplin M.D."/>
            <person name="Akan D."/>
            <person name="Paik S."/>
            <person name="Peterson D.L."/>
            <person name="Macrina F.L."/>
            <person name="Buck G.A."/>
        </authorList>
    </citation>
    <scope>NUCLEOTIDE SEQUENCE [LARGE SCALE GENOMIC DNA]</scope>
    <source>
        <strain>SK36</strain>
    </source>
</reference>
<proteinExistence type="inferred from homology"/>
<keyword id="KW-0413">Isomerase</keyword>
<keyword id="KW-0423">Lactose metabolism</keyword>
<keyword id="KW-1185">Reference proteome</keyword>
<feature type="chain" id="PRO_1000068933" description="Galactose-6-phosphate isomerase subunit LacB">
    <location>
        <begin position="1"/>
        <end position="171"/>
    </location>
</feature>
<protein>
    <recommendedName>
        <fullName evidence="1">Galactose-6-phosphate isomerase subunit LacB</fullName>
        <ecNumber evidence="1">5.3.1.26</ecNumber>
    </recommendedName>
</protein>
<name>LACB_STRSV</name>
<organism>
    <name type="scientific">Streptococcus sanguinis (strain SK36)</name>
    <dbReference type="NCBI Taxonomy" id="388919"/>
    <lineage>
        <taxon>Bacteria</taxon>
        <taxon>Bacillati</taxon>
        <taxon>Bacillota</taxon>
        <taxon>Bacilli</taxon>
        <taxon>Lactobacillales</taxon>
        <taxon>Streptococcaceae</taxon>
        <taxon>Streptococcus</taxon>
    </lineage>
</organism>
<dbReference type="EC" id="5.3.1.26" evidence="1"/>
<dbReference type="EMBL" id="CP000387">
    <property type="protein sequence ID" value="ABN45081.1"/>
    <property type="molecule type" value="Genomic_DNA"/>
</dbReference>
<dbReference type="RefSeq" id="WP_011837291.1">
    <property type="nucleotide sequence ID" value="NC_009009.1"/>
</dbReference>
<dbReference type="RefSeq" id="YP_001035631.1">
    <property type="nucleotide sequence ID" value="NC_009009.1"/>
</dbReference>
<dbReference type="SMR" id="A3CPH6"/>
<dbReference type="STRING" id="388919.SSA_1698"/>
<dbReference type="KEGG" id="ssa:SSA_1698"/>
<dbReference type="PATRIC" id="fig|388919.9.peg.1610"/>
<dbReference type="eggNOG" id="COG0698">
    <property type="taxonomic scope" value="Bacteria"/>
</dbReference>
<dbReference type="HOGENOM" id="CLU_091396_2_0_9"/>
<dbReference type="OrthoDB" id="1778624at2"/>
<dbReference type="UniPathway" id="UPA00702">
    <property type="reaction ID" value="UER00714"/>
</dbReference>
<dbReference type="Proteomes" id="UP000002148">
    <property type="component" value="Chromosome"/>
</dbReference>
<dbReference type="GO" id="GO:0050044">
    <property type="term" value="F:galactose-6-phosphate isomerase activity"/>
    <property type="evidence" value="ECO:0007669"/>
    <property type="project" value="UniProtKB-UniRule"/>
</dbReference>
<dbReference type="GO" id="GO:0004751">
    <property type="term" value="F:ribose-5-phosphate isomerase activity"/>
    <property type="evidence" value="ECO:0007669"/>
    <property type="project" value="TreeGrafter"/>
</dbReference>
<dbReference type="GO" id="GO:0019316">
    <property type="term" value="P:D-allose catabolic process"/>
    <property type="evidence" value="ECO:0007669"/>
    <property type="project" value="TreeGrafter"/>
</dbReference>
<dbReference type="GO" id="GO:0019388">
    <property type="term" value="P:galactose catabolic process"/>
    <property type="evidence" value="ECO:0007669"/>
    <property type="project" value="UniProtKB-UniPathway"/>
</dbReference>
<dbReference type="GO" id="GO:0019512">
    <property type="term" value="P:lactose catabolic process via tagatose-6-phosphate"/>
    <property type="evidence" value="ECO:0007669"/>
    <property type="project" value="UniProtKB-UniRule"/>
</dbReference>
<dbReference type="GO" id="GO:0009052">
    <property type="term" value="P:pentose-phosphate shunt, non-oxidative branch"/>
    <property type="evidence" value="ECO:0007669"/>
    <property type="project" value="TreeGrafter"/>
</dbReference>
<dbReference type="Gene3D" id="3.40.1400.10">
    <property type="entry name" value="Sugar-phosphate isomerase, RpiB/LacA/LacB"/>
    <property type="match status" value="1"/>
</dbReference>
<dbReference type="HAMAP" id="MF_01556">
    <property type="entry name" value="LacB"/>
    <property type="match status" value="1"/>
</dbReference>
<dbReference type="InterPro" id="IPR004784">
    <property type="entry name" value="LacB"/>
</dbReference>
<dbReference type="InterPro" id="IPR003500">
    <property type="entry name" value="RpiB_LacA_LacB"/>
</dbReference>
<dbReference type="InterPro" id="IPR036569">
    <property type="entry name" value="RpiB_LacA_LacB_sf"/>
</dbReference>
<dbReference type="NCBIfam" id="TIGR01119">
    <property type="entry name" value="lacB"/>
    <property type="match status" value="1"/>
</dbReference>
<dbReference type="NCBIfam" id="NF004051">
    <property type="entry name" value="PRK05571.1"/>
    <property type="match status" value="1"/>
</dbReference>
<dbReference type="NCBIfam" id="NF006381">
    <property type="entry name" value="PRK08622.1"/>
    <property type="match status" value="1"/>
</dbReference>
<dbReference type="NCBIfam" id="NF009258">
    <property type="entry name" value="PRK12615.1"/>
    <property type="match status" value="1"/>
</dbReference>
<dbReference type="NCBIfam" id="TIGR00689">
    <property type="entry name" value="rpiB_lacA_lacB"/>
    <property type="match status" value="1"/>
</dbReference>
<dbReference type="PANTHER" id="PTHR30345:SF0">
    <property type="entry name" value="DNA DAMAGE-REPAIR_TOLERATION PROTEIN DRT102"/>
    <property type="match status" value="1"/>
</dbReference>
<dbReference type="PANTHER" id="PTHR30345">
    <property type="entry name" value="RIBOSE-5-PHOSPHATE ISOMERASE B"/>
    <property type="match status" value="1"/>
</dbReference>
<dbReference type="Pfam" id="PF02502">
    <property type="entry name" value="LacAB_rpiB"/>
    <property type="match status" value="1"/>
</dbReference>
<dbReference type="PIRSF" id="PIRSF005384">
    <property type="entry name" value="RpiB_LacA_B"/>
    <property type="match status" value="1"/>
</dbReference>
<dbReference type="SUPFAM" id="SSF89623">
    <property type="entry name" value="Ribose/Galactose isomerase RpiB/AlsB"/>
    <property type="match status" value="1"/>
</dbReference>
<evidence type="ECO:0000255" key="1">
    <source>
        <dbReference type="HAMAP-Rule" id="MF_01556"/>
    </source>
</evidence>